<sequence length="396" mass="42878">MSIATTFGTANTSGTIKAMLLGCGELGKEVAIELQRYGIEVIGVDRYPNAPAMQIAHRFHVINMLDAKALKAVIELEKPDLVIPEIEAIATQTLVELEQQGLHVVPTANAAKLTMDREGIRRLAAETLAIPTSKYFFCDTLAEFEQAVTDIGIPCVVKPVMSSSGKGQSVIKSTQTIQQAWAYAQEGGRAGKGRVIVEAFIPFDYEITLLTISAVNGIHFCDPIGHRQEDGDYRESWQPQSMSAEVLHKAQAMSQRVVEALGGYGLFGVELFIRGDEVYFSEVSPRPHDTGLVTLISQDLSEFALHVRAILGLPISNIVQHGPSASAVILAEGTSTNIRYQGMAAALAPADTQLRLFGKPDIDGRRRLGVALARDNSVEQAVEKAKTVASHIKVLF</sequence>
<name>PURT_SHEFN</name>
<proteinExistence type="inferred from homology"/>
<accession>Q07YK6</accession>
<gene>
    <name evidence="1" type="primary">purT</name>
    <name type="ordered locus">Sfri_3070</name>
</gene>
<comment type="function">
    <text evidence="1">Involved in the de novo purine biosynthesis. Catalyzes the transfer of formate to 5-phospho-ribosyl-glycinamide (GAR), producing 5-phospho-ribosyl-N-formylglycinamide (FGAR). Formate is provided by PurU via hydrolysis of 10-formyl-tetrahydrofolate.</text>
</comment>
<comment type="catalytic activity">
    <reaction evidence="1">
        <text>N(1)-(5-phospho-beta-D-ribosyl)glycinamide + formate + ATP = N(2)-formyl-N(1)-(5-phospho-beta-D-ribosyl)glycinamide + ADP + phosphate + H(+)</text>
        <dbReference type="Rhea" id="RHEA:24829"/>
        <dbReference type="ChEBI" id="CHEBI:15378"/>
        <dbReference type="ChEBI" id="CHEBI:15740"/>
        <dbReference type="ChEBI" id="CHEBI:30616"/>
        <dbReference type="ChEBI" id="CHEBI:43474"/>
        <dbReference type="ChEBI" id="CHEBI:143788"/>
        <dbReference type="ChEBI" id="CHEBI:147286"/>
        <dbReference type="ChEBI" id="CHEBI:456216"/>
        <dbReference type="EC" id="6.3.1.21"/>
    </reaction>
    <physiologicalReaction direction="left-to-right" evidence="1">
        <dbReference type="Rhea" id="RHEA:24830"/>
    </physiologicalReaction>
</comment>
<comment type="pathway">
    <text evidence="1">Purine metabolism; IMP biosynthesis via de novo pathway; N(2)-formyl-N(1)-(5-phospho-D-ribosyl)glycinamide from N(1)-(5-phospho-D-ribosyl)glycinamide (formate route): step 1/1.</text>
</comment>
<comment type="subunit">
    <text evidence="1">Homodimer.</text>
</comment>
<comment type="similarity">
    <text evidence="1">Belongs to the PurK/PurT family.</text>
</comment>
<organism>
    <name type="scientific">Shewanella frigidimarina (strain NCIMB 400)</name>
    <dbReference type="NCBI Taxonomy" id="318167"/>
    <lineage>
        <taxon>Bacteria</taxon>
        <taxon>Pseudomonadati</taxon>
        <taxon>Pseudomonadota</taxon>
        <taxon>Gammaproteobacteria</taxon>
        <taxon>Alteromonadales</taxon>
        <taxon>Shewanellaceae</taxon>
        <taxon>Shewanella</taxon>
    </lineage>
</organism>
<protein>
    <recommendedName>
        <fullName evidence="1">Formate-dependent phosphoribosylglycinamide formyltransferase</fullName>
        <ecNumber evidence="1">6.3.1.21</ecNumber>
    </recommendedName>
    <alternativeName>
        <fullName evidence="1">5'-phosphoribosylglycinamide transformylase 2</fullName>
    </alternativeName>
    <alternativeName>
        <fullName evidence="1">Formate-dependent GAR transformylase</fullName>
    </alternativeName>
    <alternativeName>
        <fullName evidence="1">GAR transformylase 2</fullName>
        <shortName evidence="1">GART 2</shortName>
    </alternativeName>
    <alternativeName>
        <fullName evidence="1">Non-folate glycinamide ribonucleotide transformylase</fullName>
    </alternativeName>
    <alternativeName>
        <fullName evidence="1">Phosphoribosylglycinamide formyltransferase 2</fullName>
    </alternativeName>
</protein>
<evidence type="ECO:0000255" key="1">
    <source>
        <dbReference type="HAMAP-Rule" id="MF_01643"/>
    </source>
</evidence>
<keyword id="KW-0067">ATP-binding</keyword>
<keyword id="KW-0436">Ligase</keyword>
<keyword id="KW-0460">Magnesium</keyword>
<keyword id="KW-0479">Metal-binding</keyword>
<keyword id="KW-0547">Nucleotide-binding</keyword>
<keyword id="KW-0658">Purine biosynthesis</keyword>
<keyword id="KW-1185">Reference proteome</keyword>
<feature type="chain" id="PRO_0000319231" description="Formate-dependent phosphoribosylglycinamide formyltransferase">
    <location>
        <begin position="1"/>
        <end position="396"/>
    </location>
</feature>
<feature type="domain" description="ATP-grasp" evidence="1">
    <location>
        <begin position="122"/>
        <end position="311"/>
    </location>
</feature>
<feature type="binding site" evidence="1">
    <location>
        <begin position="25"/>
        <end position="26"/>
    </location>
    <ligand>
        <name>N(1)-(5-phospho-beta-D-ribosyl)glycinamide</name>
        <dbReference type="ChEBI" id="CHEBI:143788"/>
    </ligand>
</feature>
<feature type="binding site" evidence="1">
    <location>
        <position position="85"/>
    </location>
    <ligand>
        <name>N(1)-(5-phospho-beta-D-ribosyl)glycinamide</name>
        <dbReference type="ChEBI" id="CHEBI:143788"/>
    </ligand>
</feature>
<feature type="binding site" evidence="1">
    <location>
        <position position="117"/>
    </location>
    <ligand>
        <name>ATP</name>
        <dbReference type="ChEBI" id="CHEBI:30616"/>
    </ligand>
</feature>
<feature type="binding site" evidence="1">
    <location>
        <position position="158"/>
    </location>
    <ligand>
        <name>ATP</name>
        <dbReference type="ChEBI" id="CHEBI:30616"/>
    </ligand>
</feature>
<feature type="binding site" evidence="1">
    <location>
        <begin position="163"/>
        <end position="168"/>
    </location>
    <ligand>
        <name>ATP</name>
        <dbReference type="ChEBI" id="CHEBI:30616"/>
    </ligand>
</feature>
<feature type="binding site" evidence="1">
    <location>
        <begin position="198"/>
        <end position="201"/>
    </location>
    <ligand>
        <name>ATP</name>
        <dbReference type="ChEBI" id="CHEBI:30616"/>
    </ligand>
</feature>
<feature type="binding site" evidence="1">
    <location>
        <position position="206"/>
    </location>
    <ligand>
        <name>ATP</name>
        <dbReference type="ChEBI" id="CHEBI:30616"/>
    </ligand>
</feature>
<feature type="binding site" evidence="1">
    <location>
        <position position="270"/>
    </location>
    <ligand>
        <name>Mg(2+)</name>
        <dbReference type="ChEBI" id="CHEBI:18420"/>
    </ligand>
</feature>
<feature type="binding site" evidence="1">
    <location>
        <position position="282"/>
    </location>
    <ligand>
        <name>Mg(2+)</name>
        <dbReference type="ChEBI" id="CHEBI:18420"/>
    </ligand>
</feature>
<feature type="binding site" evidence="1">
    <location>
        <position position="289"/>
    </location>
    <ligand>
        <name>N(1)-(5-phospho-beta-D-ribosyl)glycinamide</name>
        <dbReference type="ChEBI" id="CHEBI:143788"/>
    </ligand>
</feature>
<feature type="binding site" evidence="1">
    <location>
        <position position="359"/>
    </location>
    <ligand>
        <name>N(1)-(5-phospho-beta-D-ribosyl)glycinamide</name>
        <dbReference type="ChEBI" id="CHEBI:143788"/>
    </ligand>
</feature>
<feature type="binding site" evidence="1">
    <location>
        <begin position="366"/>
        <end position="367"/>
    </location>
    <ligand>
        <name>N(1)-(5-phospho-beta-D-ribosyl)glycinamide</name>
        <dbReference type="ChEBI" id="CHEBI:143788"/>
    </ligand>
</feature>
<reference key="1">
    <citation type="submission" date="2006-08" db="EMBL/GenBank/DDBJ databases">
        <title>Complete sequence of Shewanella frigidimarina NCIMB 400.</title>
        <authorList>
            <consortium name="US DOE Joint Genome Institute"/>
            <person name="Copeland A."/>
            <person name="Lucas S."/>
            <person name="Lapidus A."/>
            <person name="Barry K."/>
            <person name="Detter J.C."/>
            <person name="Glavina del Rio T."/>
            <person name="Hammon N."/>
            <person name="Israni S."/>
            <person name="Dalin E."/>
            <person name="Tice H."/>
            <person name="Pitluck S."/>
            <person name="Fredrickson J.K."/>
            <person name="Kolker E."/>
            <person name="McCuel L.A."/>
            <person name="DiChristina T."/>
            <person name="Nealson K.H."/>
            <person name="Newman D."/>
            <person name="Tiedje J.M."/>
            <person name="Zhou J."/>
            <person name="Romine M.F."/>
            <person name="Culley D.E."/>
            <person name="Serres M."/>
            <person name="Chertkov O."/>
            <person name="Brettin T."/>
            <person name="Bruce D."/>
            <person name="Han C."/>
            <person name="Tapia R."/>
            <person name="Gilna P."/>
            <person name="Schmutz J."/>
            <person name="Larimer F."/>
            <person name="Land M."/>
            <person name="Hauser L."/>
            <person name="Kyrpides N."/>
            <person name="Mikhailova N."/>
            <person name="Richardson P."/>
        </authorList>
    </citation>
    <scope>NUCLEOTIDE SEQUENCE [LARGE SCALE GENOMIC DNA]</scope>
    <source>
        <strain>NCIMB 400</strain>
    </source>
</reference>
<dbReference type="EC" id="6.3.1.21" evidence="1"/>
<dbReference type="EMBL" id="CP000447">
    <property type="protein sequence ID" value="ABI72908.1"/>
    <property type="molecule type" value="Genomic_DNA"/>
</dbReference>
<dbReference type="RefSeq" id="WP_011638514.1">
    <property type="nucleotide sequence ID" value="NC_008345.1"/>
</dbReference>
<dbReference type="SMR" id="Q07YK6"/>
<dbReference type="STRING" id="318167.Sfri_3070"/>
<dbReference type="KEGG" id="sfr:Sfri_3070"/>
<dbReference type="eggNOG" id="COG0027">
    <property type="taxonomic scope" value="Bacteria"/>
</dbReference>
<dbReference type="HOGENOM" id="CLU_011534_1_3_6"/>
<dbReference type="OrthoDB" id="9804625at2"/>
<dbReference type="UniPathway" id="UPA00074">
    <property type="reaction ID" value="UER00127"/>
</dbReference>
<dbReference type="Proteomes" id="UP000000684">
    <property type="component" value="Chromosome"/>
</dbReference>
<dbReference type="GO" id="GO:0005829">
    <property type="term" value="C:cytosol"/>
    <property type="evidence" value="ECO:0007669"/>
    <property type="project" value="TreeGrafter"/>
</dbReference>
<dbReference type="GO" id="GO:0005524">
    <property type="term" value="F:ATP binding"/>
    <property type="evidence" value="ECO:0007669"/>
    <property type="project" value="UniProtKB-UniRule"/>
</dbReference>
<dbReference type="GO" id="GO:0000287">
    <property type="term" value="F:magnesium ion binding"/>
    <property type="evidence" value="ECO:0007669"/>
    <property type="project" value="InterPro"/>
</dbReference>
<dbReference type="GO" id="GO:0043815">
    <property type="term" value="F:phosphoribosylglycinamide formyltransferase 2 activity"/>
    <property type="evidence" value="ECO:0007669"/>
    <property type="project" value="UniProtKB-UniRule"/>
</dbReference>
<dbReference type="GO" id="GO:0004644">
    <property type="term" value="F:phosphoribosylglycinamide formyltransferase activity"/>
    <property type="evidence" value="ECO:0007669"/>
    <property type="project" value="InterPro"/>
</dbReference>
<dbReference type="GO" id="GO:0006189">
    <property type="term" value="P:'de novo' IMP biosynthetic process"/>
    <property type="evidence" value="ECO:0007669"/>
    <property type="project" value="UniProtKB-UniRule"/>
</dbReference>
<dbReference type="FunFam" id="3.30.1490.20:FF:000013">
    <property type="entry name" value="Formate-dependent phosphoribosylglycinamide formyltransferase"/>
    <property type="match status" value="1"/>
</dbReference>
<dbReference type="FunFam" id="3.30.470.20:FF:000027">
    <property type="entry name" value="Formate-dependent phosphoribosylglycinamide formyltransferase"/>
    <property type="match status" value="1"/>
</dbReference>
<dbReference type="FunFam" id="3.40.50.20:FF:000007">
    <property type="entry name" value="Formate-dependent phosphoribosylglycinamide formyltransferase"/>
    <property type="match status" value="1"/>
</dbReference>
<dbReference type="Gene3D" id="3.40.50.20">
    <property type="match status" value="1"/>
</dbReference>
<dbReference type="Gene3D" id="3.30.1490.20">
    <property type="entry name" value="ATP-grasp fold, A domain"/>
    <property type="match status" value="1"/>
</dbReference>
<dbReference type="Gene3D" id="3.30.470.20">
    <property type="entry name" value="ATP-grasp fold, B domain"/>
    <property type="match status" value="1"/>
</dbReference>
<dbReference type="HAMAP" id="MF_01643">
    <property type="entry name" value="PurT"/>
    <property type="match status" value="1"/>
</dbReference>
<dbReference type="InterPro" id="IPR011761">
    <property type="entry name" value="ATP-grasp"/>
</dbReference>
<dbReference type="InterPro" id="IPR003135">
    <property type="entry name" value="ATP-grasp_carboxylate-amine"/>
</dbReference>
<dbReference type="InterPro" id="IPR013815">
    <property type="entry name" value="ATP_grasp_subdomain_1"/>
</dbReference>
<dbReference type="InterPro" id="IPR016185">
    <property type="entry name" value="PreATP-grasp_dom_sf"/>
</dbReference>
<dbReference type="InterPro" id="IPR005862">
    <property type="entry name" value="PurT"/>
</dbReference>
<dbReference type="InterPro" id="IPR054350">
    <property type="entry name" value="PurT/PurK_preATP-grasp"/>
</dbReference>
<dbReference type="InterPro" id="IPR048740">
    <property type="entry name" value="PurT_C"/>
</dbReference>
<dbReference type="InterPro" id="IPR011054">
    <property type="entry name" value="Rudment_hybrid_motif"/>
</dbReference>
<dbReference type="NCBIfam" id="NF006766">
    <property type="entry name" value="PRK09288.1"/>
    <property type="match status" value="1"/>
</dbReference>
<dbReference type="NCBIfam" id="TIGR01142">
    <property type="entry name" value="purT"/>
    <property type="match status" value="1"/>
</dbReference>
<dbReference type="PANTHER" id="PTHR43055">
    <property type="entry name" value="FORMATE-DEPENDENT PHOSPHORIBOSYLGLYCINAMIDE FORMYLTRANSFERASE"/>
    <property type="match status" value="1"/>
</dbReference>
<dbReference type="PANTHER" id="PTHR43055:SF1">
    <property type="entry name" value="FORMATE-DEPENDENT PHOSPHORIBOSYLGLYCINAMIDE FORMYLTRANSFERASE"/>
    <property type="match status" value="1"/>
</dbReference>
<dbReference type="Pfam" id="PF02222">
    <property type="entry name" value="ATP-grasp"/>
    <property type="match status" value="1"/>
</dbReference>
<dbReference type="Pfam" id="PF21244">
    <property type="entry name" value="PurT_C"/>
    <property type="match status" value="1"/>
</dbReference>
<dbReference type="Pfam" id="PF22660">
    <property type="entry name" value="RS_preATP-grasp-like"/>
    <property type="match status" value="1"/>
</dbReference>
<dbReference type="SUPFAM" id="SSF56059">
    <property type="entry name" value="Glutathione synthetase ATP-binding domain-like"/>
    <property type="match status" value="1"/>
</dbReference>
<dbReference type="SUPFAM" id="SSF52440">
    <property type="entry name" value="PreATP-grasp domain"/>
    <property type="match status" value="1"/>
</dbReference>
<dbReference type="SUPFAM" id="SSF51246">
    <property type="entry name" value="Rudiment single hybrid motif"/>
    <property type="match status" value="1"/>
</dbReference>
<dbReference type="PROSITE" id="PS50975">
    <property type="entry name" value="ATP_GRASP"/>
    <property type="match status" value="1"/>
</dbReference>